<evidence type="ECO:0000255" key="1">
    <source>
        <dbReference type="HAMAP-Rule" id="MF_00272"/>
    </source>
</evidence>
<evidence type="ECO:0000255" key="2">
    <source>
        <dbReference type="PROSITE-ProRule" id="PRU01066"/>
    </source>
</evidence>
<name>GCSH_STAAC</name>
<gene>
    <name evidence="1" type="primary">gcvH</name>
    <name type="ordered locus">SACOL0877</name>
</gene>
<comment type="function">
    <text evidence="1">The glycine cleavage system catalyzes the degradation of glycine. The H protein shuttles the methylamine group of glycine from the P protein to the T protein.</text>
</comment>
<comment type="function">
    <text evidence="1">Is also involved in protein lipoylation via its role as an octanoyl/lipoyl carrier protein intermediate.</text>
</comment>
<comment type="cofactor">
    <cofactor evidence="1">
        <name>(R)-lipoate</name>
        <dbReference type="ChEBI" id="CHEBI:83088"/>
    </cofactor>
    <text evidence="1">Binds 1 lipoyl cofactor covalently.</text>
</comment>
<comment type="subunit">
    <text evidence="1">The glycine cleavage system is composed of four proteins: P, T, L and H.</text>
</comment>
<comment type="similarity">
    <text evidence="1">Belongs to the GcvH family.</text>
</comment>
<sequence length="126" mass="14093">MAVPNELKYSKEHEWVKVEGNVAIIGITEYAQSELGDIVFVELPETDDEINEGDTFGSVESVKTVSELYAPISGKVVEVNEELEDSPEFVNESPYEKAWMVKVEISDESQIEALLTAEKYSEMIGE</sequence>
<feature type="chain" id="PRO_0000166246" description="Glycine cleavage system H protein">
    <location>
        <begin position="1"/>
        <end position="126"/>
    </location>
</feature>
<feature type="domain" description="Lipoyl-binding" evidence="2">
    <location>
        <begin position="22"/>
        <end position="104"/>
    </location>
</feature>
<feature type="modified residue" description="N6-lipoyllysine" evidence="1">
    <location>
        <position position="63"/>
    </location>
</feature>
<dbReference type="EMBL" id="CP000046">
    <property type="protein sequence ID" value="AAW36431.1"/>
    <property type="molecule type" value="Genomic_DNA"/>
</dbReference>
<dbReference type="RefSeq" id="WP_000290485.1">
    <property type="nucleotide sequence ID" value="NZ_JBGOFO010000005.1"/>
</dbReference>
<dbReference type="SMR" id="Q5HHK8"/>
<dbReference type="KEGG" id="sac:SACOL0877"/>
<dbReference type="HOGENOM" id="CLU_097408_2_2_9"/>
<dbReference type="Proteomes" id="UP000000530">
    <property type="component" value="Chromosome"/>
</dbReference>
<dbReference type="GO" id="GO:0005829">
    <property type="term" value="C:cytosol"/>
    <property type="evidence" value="ECO:0007669"/>
    <property type="project" value="TreeGrafter"/>
</dbReference>
<dbReference type="GO" id="GO:0005960">
    <property type="term" value="C:glycine cleavage complex"/>
    <property type="evidence" value="ECO:0007669"/>
    <property type="project" value="InterPro"/>
</dbReference>
<dbReference type="GO" id="GO:0019464">
    <property type="term" value="P:glycine decarboxylation via glycine cleavage system"/>
    <property type="evidence" value="ECO:0007669"/>
    <property type="project" value="UniProtKB-UniRule"/>
</dbReference>
<dbReference type="CDD" id="cd06848">
    <property type="entry name" value="GCS_H"/>
    <property type="match status" value="1"/>
</dbReference>
<dbReference type="Gene3D" id="2.40.50.100">
    <property type="match status" value="1"/>
</dbReference>
<dbReference type="HAMAP" id="MF_00272">
    <property type="entry name" value="GcvH"/>
    <property type="match status" value="1"/>
</dbReference>
<dbReference type="InterPro" id="IPR003016">
    <property type="entry name" value="2-oxoA_DH_lipoyl-BS"/>
</dbReference>
<dbReference type="InterPro" id="IPR000089">
    <property type="entry name" value="Biotin_lipoyl"/>
</dbReference>
<dbReference type="InterPro" id="IPR002930">
    <property type="entry name" value="GCV_H"/>
</dbReference>
<dbReference type="InterPro" id="IPR033753">
    <property type="entry name" value="GCV_H/Fam206"/>
</dbReference>
<dbReference type="InterPro" id="IPR017453">
    <property type="entry name" value="GCV_H_sub"/>
</dbReference>
<dbReference type="InterPro" id="IPR011053">
    <property type="entry name" value="Single_hybrid_motif"/>
</dbReference>
<dbReference type="NCBIfam" id="TIGR00527">
    <property type="entry name" value="gcvH"/>
    <property type="match status" value="1"/>
</dbReference>
<dbReference type="NCBIfam" id="NF002270">
    <property type="entry name" value="PRK01202.1"/>
    <property type="match status" value="1"/>
</dbReference>
<dbReference type="PANTHER" id="PTHR11715">
    <property type="entry name" value="GLYCINE CLEAVAGE SYSTEM H PROTEIN"/>
    <property type="match status" value="1"/>
</dbReference>
<dbReference type="PANTHER" id="PTHR11715:SF3">
    <property type="entry name" value="GLYCINE CLEAVAGE SYSTEM H PROTEIN-RELATED"/>
    <property type="match status" value="1"/>
</dbReference>
<dbReference type="Pfam" id="PF01597">
    <property type="entry name" value="GCV_H"/>
    <property type="match status" value="1"/>
</dbReference>
<dbReference type="SUPFAM" id="SSF51230">
    <property type="entry name" value="Single hybrid motif"/>
    <property type="match status" value="1"/>
</dbReference>
<dbReference type="PROSITE" id="PS50968">
    <property type="entry name" value="BIOTINYL_LIPOYL"/>
    <property type="match status" value="1"/>
</dbReference>
<dbReference type="PROSITE" id="PS00189">
    <property type="entry name" value="LIPOYL"/>
    <property type="match status" value="1"/>
</dbReference>
<protein>
    <recommendedName>
        <fullName evidence="1">Glycine cleavage system H protein</fullName>
    </recommendedName>
    <alternativeName>
        <fullName evidence="1">Octanoyl/lipoyl carrier protein</fullName>
    </alternativeName>
</protein>
<reference key="1">
    <citation type="journal article" date="2005" name="J. Bacteriol.">
        <title>Insights on evolution of virulence and resistance from the complete genome analysis of an early methicillin-resistant Staphylococcus aureus strain and a biofilm-producing methicillin-resistant Staphylococcus epidermidis strain.</title>
        <authorList>
            <person name="Gill S.R."/>
            <person name="Fouts D.E."/>
            <person name="Archer G.L."/>
            <person name="Mongodin E.F."/>
            <person name="DeBoy R.T."/>
            <person name="Ravel J."/>
            <person name="Paulsen I.T."/>
            <person name="Kolonay J.F."/>
            <person name="Brinkac L.M."/>
            <person name="Beanan M.J."/>
            <person name="Dodson R.J."/>
            <person name="Daugherty S.C."/>
            <person name="Madupu R."/>
            <person name="Angiuoli S.V."/>
            <person name="Durkin A.S."/>
            <person name="Haft D.H."/>
            <person name="Vamathevan J.J."/>
            <person name="Khouri H."/>
            <person name="Utterback T.R."/>
            <person name="Lee C."/>
            <person name="Dimitrov G."/>
            <person name="Jiang L."/>
            <person name="Qin H."/>
            <person name="Weidman J."/>
            <person name="Tran K."/>
            <person name="Kang K.H."/>
            <person name="Hance I.R."/>
            <person name="Nelson K.E."/>
            <person name="Fraser C.M."/>
        </authorList>
    </citation>
    <scope>NUCLEOTIDE SEQUENCE [LARGE SCALE GENOMIC DNA]</scope>
    <source>
        <strain>COL</strain>
    </source>
</reference>
<organism>
    <name type="scientific">Staphylococcus aureus (strain COL)</name>
    <dbReference type="NCBI Taxonomy" id="93062"/>
    <lineage>
        <taxon>Bacteria</taxon>
        <taxon>Bacillati</taxon>
        <taxon>Bacillota</taxon>
        <taxon>Bacilli</taxon>
        <taxon>Bacillales</taxon>
        <taxon>Staphylococcaceae</taxon>
        <taxon>Staphylococcus</taxon>
    </lineage>
</organism>
<proteinExistence type="inferred from homology"/>
<accession>Q5HHK8</accession>
<keyword id="KW-0450">Lipoyl</keyword>